<gene>
    <name type="primary">SYT3</name>
    <name type="synonym">SYTC</name>
    <name type="ordered locus">At5g04220</name>
    <name type="ORF">F21E1.140</name>
</gene>
<keyword id="KW-0025">Alternative splicing</keyword>
<keyword id="KW-0106">Calcium</keyword>
<keyword id="KW-0445">Lipid transport</keyword>
<keyword id="KW-0446">Lipid-binding</keyword>
<keyword id="KW-0472">Membrane</keyword>
<keyword id="KW-0479">Metal-binding</keyword>
<keyword id="KW-1185">Reference proteome</keyword>
<keyword id="KW-0677">Repeat</keyword>
<keyword id="KW-0812">Transmembrane</keyword>
<keyword id="KW-1133">Transmembrane helix</keyword>
<keyword id="KW-0813">Transport</keyword>
<accession>Q7XA06</accession>
<accession>B6ETT6</accession>
<accession>Q9FYD9</accession>
<protein>
    <recommendedName>
        <fullName>Synaptotagmin-3</fullName>
    </recommendedName>
    <alternativeName>
        <fullName>NTMC2T1.3</fullName>
    </alternativeName>
    <alternativeName>
        <fullName>Synaptotagmin C</fullName>
    </alternativeName>
</protein>
<feature type="chain" id="PRO_0000419240" description="Synaptotagmin-3">
    <location>
        <begin position="1"/>
        <end position="540"/>
    </location>
</feature>
<feature type="transmembrane region" description="Helical" evidence="2">
    <location>
        <begin position="9"/>
        <end position="29"/>
    </location>
</feature>
<feature type="domain" description="SMP-LTD" evidence="4">
    <location>
        <begin position="67"/>
        <end position="249"/>
    </location>
</feature>
<feature type="domain" description="C2 1" evidence="3">
    <location>
        <begin position="240"/>
        <end position="363"/>
    </location>
</feature>
<feature type="domain" description="C2 2" evidence="3">
    <location>
        <begin position="401"/>
        <end position="521"/>
    </location>
</feature>
<feature type="region of interest" description="Phospholipid binding" evidence="1">
    <location>
        <begin position="227"/>
        <end position="509"/>
    </location>
</feature>
<feature type="binding site" evidence="3">
    <location>
        <position position="277"/>
    </location>
    <ligand>
        <name>Ca(2+)</name>
        <dbReference type="ChEBI" id="CHEBI:29108"/>
        <label>1</label>
    </ligand>
</feature>
<feature type="binding site" evidence="3">
    <location>
        <position position="277"/>
    </location>
    <ligand>
        <name>Ca(2+)</name>
        <dbReference type="ChEBI" id="CHEBI:29108"/>
        <label>2</label>
    </ligand>
</feature>
<feature type="binding site" evidence="3">
    <location>
        <position position="283"/>
    </location>
    <ligand>
        <name>Ca(2+)</name>
        <dbReference type="ChEBI" id="CHEBI:29108"/>
        <label>1</label>
    </ligand>
</feature>
<feature type="binding site" evidence="3">
    <location>
        <position position="333"/>
    </location>
    <ligand>
        <name>Ca(2+)</name>
        <dbReference type="ChEBI" id="CHEBI:29108"/>
        <label>1</label>
    </ligand>
</feature>
<feature type="binding site" evidence="3">
    <location>
        <position position="333"/>
    </location>
    <ligand>
        <name>Ca(2+)</name>
        <dbReference type="ChEBI" id="CHEBI:29108"/>
        <label>2</label>
    </ligand>
</feature>
<feature type="binding site" evidence="3">
    <location>
        <position position="335"/>
    </location>
    <ligand>
        <name>Ca(2+)</name>
        <dbReference type="ChEBI" id="CHEBI:29108"/>
        <label>1</label>
    </ligand>
</feature>
<feature type="binding site" evidence="3">
    <location>
        <position position="335"/>
    </location>
    <ligand>
        <name>Ca(2+)</name>
        <dbReference type="ChEBI" id="CHEBI:29108"/>
        <label>2</label>
    </ligand>
</feature>
<feature type="binding site" evidence="3">
    <location>
        <position position="341"/>
    </location>
    <ligand>
        <name>Ca(2+)</name>
        <dbReference type="ChEBI" id="CHEBI:29108"/>
        <label>2</label>
    </ligand>
</feature>
<feature type="splice variant" id="VSP_044138" description="In isoform 2." evidence="5">
    <original>MGFFTSVLGIIGFVIGIPIGLILGFFVLIYSQPSHQEYPPARPLVETSISVLLDLLPDIPLWMKNPDYERVDWFNKFISYMWPYLDKAVCGIIRSSVQPLFADYIGTFCIESIEFENLSLGTLPPTVHGVKFYETNEKELLFEPSIKWAGNPNIVLVLKVLSLRIRVQLVDLQFFAIVRVALKPLLPTFPCFGMVVVSLMEKPHVDFGLKVLGGDLMSIPGLYRYVQ</original>
    <variation>MILLS</variation>
    <location>
        <begin position="1"/>
        <end position="227"/>
    </location>
</feature>
<reference key="1">
    <citation type="journal article" date="2003" name="J. Biochem.">
        <title>Molecular cloning, expression, and characterization of a novel class of synaptotagmin (Syt XIV) conserved from Drosophila to humans.</title>
        <authorList>
            <person name="Fukuda M."/>
        </authorList>
    </citation>
    <scope>NUCLEOTIDE SEQUENCE [MRNA] (ISOFORM 1)</scope>
</reference>
<reference key="2">
    <citation type="journal article" date="2007" name="BMC Genomics">
        <title>Evolutionary genomics of plant genes encoding N-terminal-TM-C2 domain proteins and the similar FAM62 genes and synaptotagmin genes of metazoans.</title>
        <authorList>
            <person name="Craxton M."/>
        </authorList>
    </citation>
    <scope>NUCLEOTIDE SEQUENCE [MRNA] (ISOFORMS 1 AND 2)</scope>
</reference>
<reference key="3">
    <citation type="journal article" date="2000" name="Nature">
        <title>Sequence and analysis of chromosome 5 of the plant Arabidopsis thaliana.</title>
        <authorList>
            <person name="Tabata S."/>
            <person name="Kaneko T."/>
            <person name="Nakamura Y."/>
            <person name="Kotani H."/>
            <person name="Kato T."/>
            <person name="Asamizu E."/>
            <person name="Miyajima N."/>
            <person name="Sasamoto S."/>
            <person name="Kimura T."/>
            <person name="Hosouchi T."/>
            <person name="Kawashima K."/>
            <person name="Kohara M."/>
            <person name="Matsumoto M."/>
            <person name="Matsuno A."/>
            <person name="Muraki A."/>
            <person name="Nakayama S."/>
            <person name="Nakazaki N."/>
            <person name="Naruo K."/>
            <person name="Okumura S."/>
            <person name="Shinpo S."/>
            <person name="Takeuchi C."/>
            <person name="Wada T."/>
            <person name="Watanabe A."/>
            <person name="Yamada M."/>
            <person name="Yasuda M."/>
            <person name="Sato S."/>
            <person name="de la Bastide M."/>
            <person name="Huang E."/>
            <person name="Spiegel L."/>
            <person name="Gnoj L."/>
            <person name="O'Shaughnessy A."/>
            <person name="Preston R."/>
            <person name="Habermann K."/>
            <person name="Murray J."/>
            <person name="Johnson D."/>
            <person name="Rohlfing T."/>
            <person name="Nelson J."/>
            <person name="Stoneking T."/>
            <person name="Pepin K."/>
            <person name="Spieth J."/>
            <person name="Sekhon M."/>
            <person name="Armstrong J."/>
            <person name="Becker M."/>
            <person name="Belter E."/>
            <person name="Cordum H."/>
            <person name="Cordes M."/>
            <person name="Courtney L."/>
            <person name="Courtney W."/>
            <person name="Dante M."/>
            <person name="Du H."/>
            <person name="Edwards J."/>
            <person name="Fryman J."/>
            <person name="Haakensen B."/>
            <person name="Lamar E."/>
            <person name="Latreille P."/>
            <person name="Leonard S."/>
            <person name="Meyer R."/>
            <person name="Mulvaney E."/>
            <person name="Ozersky P."/>
            <person name="Riley A."/>
            <person name="Strowmatt C."/>
            <person name="Wagner-McPherson C."/>
            <person name="Wollam A."/>
            <person name="Yoakum M."/>
            <person name="Bell M."/>
            <person name="Dedhia N."/>
            <person name="Parnell L."/>
            <person name="Shah R."/>
            <person name="Rodriguez M."/>
            <person name="Hoon See L."/>
            <person name="Vil D."/>
            <person name="Baker J."/>
            <person name="Kirchoff K."/>
            <person name="Toth K."/>
            <person name="King L."/>
            <person name="Bahret A."/>
            <person name="Miller B."/>
            <person name="Marra M.A."/>
            <person name="Martienssen R."/>
            <person name="McCombie W.R."/>
            <person name="Wilson R.K."/>
            <person name="Murphy G."/>
            <person name="Bancroft I."/>
            <person name="Volckaert G."/>
            <person name="Wambutt R."/>
            <person name="Duesterhoeft A."/>
            <person name="Stiekema W."/>
            <person name="Pohl T."/>
            <person name="Entian K.-D."/>
            <person name="Terryn N."/>
            <person name="Hartley N."/>
            <person name="Bent E."/>
            <person name="Johnson S."/>
            <person name="Langham S.-A."/>
            <person name="McCullagh B."/>
            <person name="Robben J."/>
            <person name="Grymonprez B."/>
            <person name="Zimmermann W."/>
            <person name="Ramsperger U."/>
            <person name="Wedler H."/>
            <person name="Balke K."/>
            <person name="Wedler E."/>
            <person name="Peters S."/>
            <person name="van Staveren M."/>
            <person name="Dirkse W."/>
            <person name="Mooijman P."/>
            <person name="Klein Lankhorst R."/>
            <person name="Weitzenegger T."/>
            <person name="Bothe G."/>
            <person name="Rose M."/>
            <person name="Hauf J."/>
            <person name="Berneiser S."/>
            <person name="Hempel S."/>
            <person name="Feldpausch M."/>
            <person name="Lamberth S."/>
            <person name="Villarroel R."/>
            <person name="Gielen J."/>
            <person name="Ardiles W."/>
            <person name="Bents O."/>
            <person name="Lemcke K."/>
            <person name="Kolesov G."/>
            <person name="Mayer K.F.X."/>
            <person name="Rudd S."/>
            <person name="Schoof H."/>
            <person name="Schueller C."/>
            <person name="Zaccaria P."/>
            <person name="Mewes H.-W."/>
            <person name="Bevan M."/>
            <person name="Fransz P.F."/>
        </authorList>
    </citation>
    <scope>NUCLEOTIDE SEQUENCE [LARGE SCALE GENOMIC DNA]</scope>
    <source>
        <strain>cv. Columbia</strain>
    </source>
</reference>
<reference key="4">
    <citation type="journal article" date="2017" name="Plant J.">
        <title>Araport11: a complete reannotation of the Arabidopsis thaliana reference genome.</title>
        <authorList>
            <person name="Cheng C.Y."/>
            <person name="Krishnakumar V."/>
            <person name="Chan A.P."/>
            <person name="Thibaud-Nissen F."/>
            <person name="Schobel S."/>
            <person name="Town C.D."/>
        </authorList>
    </citation>
    <scope>GENOME REANNOTATION</scope>
    <source>
        <strain>cv. Columbia</strain>
    </source>
</reference>
<dbReference type="EMBL" id="AB102952">
    <property type="protein sequence ID" value="BAC76813.1"/>
    <property type="molecule type" value="mRNA"/>
</dbReference>
<dbReference type="EMBL" id="FM213367">
    <property type="protein sequence ID" value="CAR82572.1"/>
    <property type="molecule type" value="mRNA"/>
</dbReference>
<dbReference type="EMBL" id="FM213368">
    <property type="protein sequence ID" value="CAR82573.1"/>
    <property type="molecule type" value="mRNA"/>
</dbReference>
<dbReference type="EMBL" id="AL391716">
    <property type="protein sequence ID" value="CAC05504.1"/>
    <property type="status" value="ALT_SEQ"/>
    <property type="molecule type" value="Genomic_DNA"/>
</dbReference>
<dbReference type="EMBL" id="CP002688">
    <property type="protein sequence ID" value="AED90712.1"/>
    <property type="molecule type" value="Genomic_DNA"/>
</dbReference>
<dbReference type="EMBL" id="CP002688">
    <property type="protein sequence ID" value="AED90713.1"/>
    <property type="molecule type" value="Genomic_DNA"/>
</dbReference>
<dbReference type="RefSeq" id="NP_568135.1">
    <molecule id="Q7XA06-2"/>
    <property type="nucleotide sequence ID" value="NM_120504.2"/>
</dbReference>
<dbReference type="RefSeq" id="NP_974729.1">
    <molecule id="Q7XA06-1"/>
    <property type="nucleotide sequence ID" value="NM_203000.2"/>
</dbReference>
<dbReference type="SMR" id="Q7XA06"/>
<dbReference type="FunCoup" id="Q7XA06">
    <property type="interactions" value="1579"/>
</dbReference>
<dbReference type="STRING" id="3702.Q7XA06"/>
<dbReference type="iPTMnet" id="Q7XA06"/>
<dbReference type="PaxDb" id="3702-AT5G04220.2"/>
<dbReference type="ProteomicsDB" id="234109">
    <molecule id="Q7XA06-1"/>
</dbReference>
<dbReference type="EnsemblPlants" id="AT5G04220.1">
    <molecule id="Q7XA06-2"/>
    <property type="protein sequence ID" value="AT5G04220.1"/>
    <property type="gene ID" value="AT5G04220"/>
</dbReference>
<dbReference type="EnsemblPlants" id="AT5G04220.2">
    <molecule id="Q7XA06-1"/>
    <property type="protein sequence ID" value="AT5G04220.2"/>
    <property type="gene ID" value="AT5G04220"/>
</dbReference>
<dbReference type="GeneID" id="830301"/>
<dbReference type="Gramene" id="AT5G04220.1">
    <molecule id="Q7XA06-2"/>
    <property type="protein sequence ID" value="AT5G04220.1"/>
    <property type="gene ID" value="AT5G04220"/>
</dbReference>
<dbReference type="Gramene" id="AT5G04220.2">
    <molecule id="Q7XA06-1"/>
    <property type="protein sequence ID" value="AT5G04220.2"/>
    <property type="gene ID" value="AT5G04220"/>
</dbReference>
<dbReference type="KEGG" id="ath:AT5G04220"/>
<dbReference type="Araport" id="AT5G04220"/>
<dbReference type="TAIR" id="AT5G04220">
    <property type="gene designation" value="SYTC"/>
</dbReference>
<dbReference type="eggNOG" id="KOG1012">
    <property type="taxonomic scope" value="Eukaryota"/>
</dbReference>
<dbReference type="HOGENOM" id="CLU_028927_1_0_1"/>
<dbReference type="InParanoid" id="Q7XA06"/>
<dbReference type="OrthoDB" id="67700at2759"/>
<dbReference type="PhylomeDB" id="Q7XA06"/>
<dbReference type="PRO" id="PR:Q7XA06"/>
<dbReference type="Proteomes" id="UP000006548">
    <property type="component" value="Chromosome 5"/>
</dbReference>
<dbReference type="ExpressionAtlas" id="Q7XA06">
    <property type="expression patterns" value="baseline and differential"/>
</dbReference>
<dbReference type="GO" id="GO:0005737">
    <property type="term" value="C:cytoplasm"/>
    <property type="evidence" value="ECO:0007669"/>
    <property type="project" value="UniProtKB-ARBA"/>
</dbReference>
<dbReference type="GO" id="GO:0012505">
    <property type="term" value="C:endomembrane system"/>
    <property type="evidence" value="ECO:0007669"/>
    <property type="project" value="UniProtKB-ARBA"/>
</dbReference>
<dbReference type="GO" id="GO:0016020">
    <property type="term" value="C:membrane"/>
    <property type="evidence" value="ECO:0007669"/>
    <property type="project" value="UniProtKB-SubCell"/>
</dbReference>
<dbReference type="GO" id="GO:0008289">
    <property type="term" value="F:lipid binding"/>
    <property type="evidence" value="ECO:0007669"/>
    <property type="project" value="UniProtKB-KW"/>
</dbReference>
<dbReference type="GO" id="GO:0046872">
    <property type="term" value="F:metal ion binding"/>
    <property type="evidence" value="ECO:0007669"/>
    <property type="project" value="UniProtKB-KW"/>
</dbReference>
<dbReference type="GO" id="GO:0006869">
    <property type="term" value="P:lipid transport"/>
    <property type="evidence" value="ECO:0007669"/>
    <property type="project" value="UniProtKB-KW"/>
</dbReference>
<dbReference type="CDD" id="cd00030">
    <property type="entry name" value="C2"/>
    <property type="match status" value="1"/>
</dbReference>
<dbReference type="CDD" id="cd21677">
    <property type="entry name" value="SMP_SYT"/>
    <property type="match status" value="1"/>
</dbReference>
<dbReference type="FunFam" id="2.60.40.150:FF:000066">
    <property type="entry name" value="Extended synaptotagmin-2"/>
    <property type="match status" value="1"/>
</dbReference>
<dbReference type="FunFam" id="2.60.40.150:FF:000102">
    <property type="entry name" value="Synaptotagmin-2 isoform A"/>
    <property type="match status" value="1"/>
</dbReference>
<dbReference type="Gene3D" id="2.60.40.150">
    <property type="entry name" value="C2 domain"/>
    <property type="match status" value="2"/>
</dbReference>
<dbReference type="InterPro" id="IPR000008">
    <property type="entry name" value="C2_dom"/>
</dbReference>
<dbReference type="InterPro" id="IPR035892">
    <property type="entry name" value="C2_domain_sf"/>
</dbReference>
<dbReference type="InterPro" id="IPR031468">
    <property type="entry name" value="SMP_LBD"/>
</dbReference>
<dbReference type="InterPro" id="IPR045050">
    <property type="entry name" value="Synaptotagmin_plant"/>
</dbReference>
<dbReference type="InterPro" id="IPR039010">
    <property type="entry name" value="Synaptotagmin_SMP"/>
</dbReference>
<dbReference type="PANTHER" id="PTHR10774">
    <property type="entry name" value="EXTENDED SYNAPTOTAGMIN-RELATED"/>
    <property type="match status" value="1"/>
</dbReference>
<dbReference type="PANTHER" id="PTHR10774:SF62">
    <property type="entry name" value="SYNAPTOTAGMIN-3"/>
    <property type="match status" value="1"/>
</dbReference>
<dbReference type="Pfam" id="PF00168">
    <property type="entry name" value="C2"/>
    <property type="match status" value="2"/>
</dbReference>
<dbReference type="Pfam" id="PF17047">
    <property type="entry name" value="SMP_LBD"/>
    <property type="match status" value="1"/>
</dbReference>
<dbReference type="PRINTS" id="PR00360">
    <property type="entry name" value="C2DOMAIN"/>
</dbReference>
<dbReference type="SMART" id="SM00239">
    <property type="entry name" value="C2"/>
    <property type="match status" value="2"/>
</dbReference>
<dbReference type="SUPFAM" id="SSF49562">
    <property type="entry name" value="C2 domain (Calcium/lipid-binding domain, CaLB)"/>
    <property type="match status" value="2"/>
</dbReference>
<dbReference type="PROSITE" id="PS50004">
    <property type="entry name" value="C2"/>
    <property type="match status" value="2"/>
</dbReference>
<dbReference type="PROSITE" id="PS51847">
    <property type="entry name" value="SMP"/>
    <property type="match status" value="1"/>
</dbReference>
<sequence length="540" mass="61870">MGFFTSVLGIIGFVIGIPIGLILGFFVLIYSQPSHQEYPPARPLVETSISVLLDLLPDIPLWMKNPDYERVDWFNKFISYMWPYLDKAVCGIIRSSVQPLFADYIGTFCIESIEFENLSLGTLPPTVHGVKFYETNEKELLFEPSIKWAGNPNIVLVLKVLSLRIRVQLVDLQFFAIVRVALKPLLPTFPCFGMVVVSLMEKPHVDFGLKVLGGDLMSIPGLYRYVQETIKRQVSSMYHWPQVLEIPILDSSTASVKKPVGLLHVSILRARNLLKKDLLGTSDPYVKLSLTGEKLPAKKTTIKKRNLNPEWNEHFKLIVKDPNSQVLQLEVFDWDKVGGHDRLGMQMIPLQKINPGERKEFNLDLIKNSNVVMDSGDKKKRGRLEVDLRYVPFREESIKRRKESREEKSSEDDDFLSQAGLLSVAVQSAKDVEGKKKHSNPYAVVLFRGEKKKTKMLKKTRDPRWNEEFQFTLEEPPVKESIRVEVMSKGTGFHFRSKEELGHVDINLDDVVDNGRINQKYHLINSRNGIIHIEIRWTTS</sequence>
<comment type="function">
    <text evidence="1">May be involved in membrane trafficking.</text>
</comment>
<comment type="cofactor">
    <cofactor evidence="3">
        <name>Ca(2+)</name>
        <dbReference type="ChEBI" id="CHEBI:29108"/>
    </cofactor>
</comment>
<comment type="subcellular location">
    <subcellularLocation>
        <location evidence="1">Membrane</location>
        <topology evidence="1">Single-pass membrane protein</topology>
    </subcellularLocation>
</comment>
<comment type="alternative products">
    <event type="alternative splicing"/>
    <isoform>
        <id>Q7XA06-1</id>
        <name>1</name>
        <sequence type="displayed"/>
    </isoform>
    <isoform>
        <id>Q7XA06-2</id>
        <name>2</name>
        <sequence type="described" ref="VSP_044138"/>
    </isoform>
</comment>
<comment type="similarity">
    <text evidence="6">Belongs to the synaptotagmin family.</text>
</comment>
<comment type="sequence caution" evidence="6">
    <conflict type="erroneous gene model prediction">
        <sequence resource="EMBL-CDS" id="CAC05504"/>
    </conflict>
</comment>
<organism>
    <name type="scientific">Arabidopsis thaliana</name>
    <name type="common">Mouse-ear cress</name>
    <dbReference type="NCBI Taxonomy" id="3702"/>
    <lineage>
        <taxon>Eukaryota</taxon>
        <taxon>Viridiplantae</taxon>
        <taxon>Streptophyta</taxon>
        <taxon>Embryophyta</taxon>
        <taxon>Tracheophyta</taxon>
        <taxon>Spermatophyta</taxon>
        <taxon>Magnoliopsida</taxon>
        <taxon>eudicotyledons</taxon>
        <taxon>Gunneridae</taxon>
        <taxon>Pentapetalae</taxon>
        <taxon>rosids</taxon>
        <taxon>malvids</taxon>
        <taxon>Brassicales</taxon>
        <taxon>Brassicaceae</taxon>
        <taxon>Camelineae</taxon>
        <taxon>Arabidopsis</taxon>
    </lineage>
</organism>
<name>SYT3_ARATH</name>
<evidence type="ECO:0000250" key="1"/>
<evidence type="ECO:0000255" key="2"/>
<evidence type="ECO:0000255" key="3">
    <source>
        <dbReference type="PROSITE-ProRule" id="PRU00041"/>
    </source>
</evidence>
<evidence type="ECO:0000255" key="4">
    <source>
        <dbReference type="PROSITE-ProRule" id="PRU01194"/>
    </source>
</evidence>
<evidence type="ECO:0000303" key="5">
    <source>
    </source>
</evidence>
<evidence type="ECO:0000305" key="6"/>
<proteinExistence type="evidence at transcript level"/>